<keyword id="KW-1185">Reference proteome</keyword>
<name>Y925_CROS8</name>
<proteinExistence type="inferred from homology"/>
<comment type="similarity">
    <text evidence="1">Belongs to the UPF0304 family.</text>
</comment>
<accession>A7MH30</accession>
<protein>
    <recommendedName>
        <fullName evidence="1">UPF0304 protein ESA_00925</fullName>
    </recommendedName>
</protein>
<evidence type="ECO:0000255" key="1">
    <source>
        <dbReference type="HAMAP-Rule" id="MF_00762"/>
    </source>
</evidence>
<sequence length="164" mass="19444">MEMTHAQRLILSNQYKMMTLLDPENGERYRRLQTIIERGYGLQMRELDRDFGELSEETCRTVIDIMEMYHALQVSRSNMKEGQSIDERRVTFLGFDAATEARFLGYVRFLVNTEGRYTHFDAGTHGFNAQTPMWEKYQRMLKVWQACPRQYHLCANEIMQIINA</sequence>
<reference key="1">
    <citation type="journal article" date="2010" name="PLoS ONE">
        <title>Genome sequence of Cronobacter sakazakii BAA-894 and comparative genomic hybridization analysis with other Cronobacter species.</title>
        <authorList>
            <person name="Kucerova E."/>
            <person name="Clifton S.W."/>
            <person name="Xia X.Q."/>
            <person name="Long F."/>
            <person name="Porwollik S."/>
            <person name="Fulton L."/>
            <person name="Fronick C."/>
            <person name="Minx P."/>
            <person name="Kyung K."/>
            <person name="Warren W."/>
            <person name="Fulton R."/>
            <person name="Feng D."/>
            <person name="Wollam A."/>
            <person name="Shah N."/>
            <person name="Bhonagiri V."/>
            <person name="Nash W.E."/>
            <person name="Hallsworth-Pepin K."/>
            <person name="Wilson R.K."/>
            <person name="McClelland M."/>
            <person name="Forsythe S.J."/>
        </authorList>
    </citation>
    <scope>NUCLEOTIDE SEQUENCE [LARGE SCALE GENOMIC DNA]</scope>
    <source>
        <strain>ATCC BAA-894</strain>
    </source>
</reference>
<organism>
    <name type="scientific">Cronobacter sakazakii (strain ATCC BAA-894)</name>
    <name type="common">Enterobacter sakazakii</name>
    <dbReference type="NCBI Taxonomy" id="290339"/>
    <lineage>
        <taxon>Bacteria</taxon>
        <taxon>Pseudomonadati</taxon>
        <taxon>Pseudomonadota</taxon>
        <taxon>Gammaproteobacteria</taxon>
        <taxon>Enterobacterales</taxon>
        <taxon>Enterobacteriaceae</taxon>
        <taxon>Cronobacter</taxon>
    </lineage>
</organism>
<feature type="chain" id="PRO_1000046761" description="UPF0304 protein ESA_00925">
    <location>
        <begin position="1"/>
        <end position="164"/>
    </location>
</feature>
<gene>
    <name type="ordered locus">ESA_00925</name>
</gene>
<dbReference type="EMBL" id="CP000783">
    <property type="protein sequence ID" value="ABU76195.1"/>
    <property type="molecule type" value="Genomic_DNA"/>
</dbReference>
<dbReference type="RefSeq" id="WP_012124154.1">
    <property type="nucleotide sequence ID" value="NC_009778.1"/>
</dbReference>
<dbReference type="SMR" id="A7MH30"/>
<dbReference type="KEGG" id="esa:ESA_00925"/>
<dbReference type="PATRIC" id="fig|290339.8.peg.824"/>
<dbReference type="HOGENOM" id="CLU_101021_1_0_6"/>
<dbReference type="Proteomes" id="UP000000260">
    <property type="component" value="Chromosome"/>
</dbReference>
<dbReference type="Gene3D" id="1.10.287.680">
    <property type="entry name" value="Helix hairpin bin"/>
    <property type="match status" value="1"/>
</dbReference>
<dbReference type="Gene3D" id="1.10.3190.10">
    <property type="entry name" value="yfbu gene product, domain 2"/>
    <property type="match status" value="1"/>
</dbReference>
<dbReference type="HAMAP" id="MF_00762">
    <property type="entry name" value="UPF0304"/>
    <property type="match status" value="1"/>
</dbReference>
<dbReference type="InterPro" id="IPR005587">
    <property type="entry name" value="UPF0304_YfbU"/>
</dbReference>
<dbReference type="InterPro" id="IPR023146">
    <property type="entry name" value="YfbU_alpha-helical_sf"/>
</dbReference>
<dbReference type="InterPro" id="IPR023145">
    <property type="entry name" value="YfbU_helix-hairpin_sf"/>
</dbReference>
<dbReference type="NCBIfam" id="NF003936">
    <property type="entry name" value="PRK05445.1"/>
    <property type="match status" value="1"/>
</dbReference>
<dbReference type="Pfam" id="PF03887">
    <property type="entry name" value="YfbU"/>
    <property type="match status" value="1"/>
</dbReference>
<dbReference type="PIRSF" id="PIRSF006272">
    <property type="entry name" value="UCP006272"/>
    <property type="match status" value="1"/>
</dbReference>
<dbReference type="SUPFAM" id="SSF116960">
    <property type="entry name" value="YfbU-like"/>
    <property type="match status" value="1"/>
</dbReference>